<dbReference type="EMBL" id="AC083835">
    <property type="protein sequence ID" value="AAG50621.1"/>
    <property type="molecule type" value="Genomic_DNA"/>
</dbReference>
<dbReference type="EMBL" id="CP002684">
    <property type="protein sequence ID" value="AEE32119.1"/>
    <property type="molecule type" value="Genomic_DNA"/>
</dbReference>
<dbReference type="PIR" id="G96510">
    <property type="entry name" value="G96510"/>
</dbReference>
<dbReference type="RefSeq" id="NP_175138.1">
    <property type="nucleotide sequence ID" value="NM_103598.1"/>
</dbReference>
<dbReference type="SMR" id="Q9C638"/>
<dbReference type="STRING" id="3702.Q9C638"/>
<dbReference type="iPTMnet" id="Q9C638"/>
<dbReference type="PaxDb" id="3702-AT1G45545.1"/>
<dbReference type="EnsemblPlants" id="AT1G45545.1">
    <property type="protein sequence ID" value="AT1G45545.1"/>
    <property type="gene ID" value="AT1G45545"/>
</dbReference>
<dbReference type="GeneID" id="841100"/>
<dbReference type="Gramene" id="AT1G45545.1">
    <property type="protein sequence ID" value="AT1G45545.1"/>
    <property type="gene ID" value="AT1G45545"/>
</dbReference>
<dbReference type="KEGG" id="ath:AT1G45545"/>
<dbReference type="Araport" id="AT1G45545"/>
<dbReference type="TAIR" id="AT1G45545"/>
<dbReference type="eggNOG" id="ENOG502QQFI">
    <property type="taxonomic scope" value="Eukaryota"/>
</dbReference>
<dbReference type="HOGENOM" id="CLU_008410_1_1_1"/>
<dbReference type="InParanoid" id="Q9C638"/>
<dbReference type="OMA" id="KKVSMDH"/>
<dbReference type="PhylomeDB" id="Q9C638"/>
<dbReference type="PRO" id="PR:Q9C638"/>
<dbReference type="Proteomes" id="UP000006548">
    <property type="component" value="Chromosome 1"/>
</dbReference>
<dbReference type="ExpressionAtlas" id="Q9C638">
    <property type="expression patterns" value="baseline and differential"/>
</dbReference>
<dbReference type="InterPro" id="IPR008545">
    <property type="entry name" value="Web"/>
</dbReference>
<dbReference type="PANTHER" id="PTHR32054">
    <property type="entry name" value="HEAVY CHAIN, PUTATIVE, EXPRESSED-RELATED-RELATED"/>
    <property type="match status" value="1"/>
</dbReference>
<dbReference type="PANTHER" id="PTHR32054:SF32">
    <property type="entry name" value="PROTEIN WEAK CHLOROPLAST MOVEMENT UNDER BLUE LIGHT-LIKE 2"/>
    <property type="match status" value="1"/>
</dbReference>
<dbReference type="Pfam" id="PF05701">
    <property type="entry name" value="WEMBL"/>
    <property type="match status" value="2"/>
</dbReference>
<accession>Q9C638</accession>
<keyword id="KW-0175">Coiled coil</keyword>
<keyword id="KW-0597">Phosphoprotein</keyword>
<keyword id="KW-1185">Reference proteome</keyword>
<organism>
    <name type="scientific">Arabidopsis thaliana</name>
    <name type="common">Mouse-ear cress</name>
    <dbReference type="NCBI Taxonomy" id="3702"/>
    <lineage>
        <taxon>Eukaryota</taxon>
        <taxon>Viridiplantae</taxon>
        <taxon>Streptophyta</taxon>
        <taxon>Embryophyta</taxon>
        <taxon>Tracheophyta</taxon>
        <taxon>Spermatophyta</taxon>
        <taxon>Magnoliopsida</taxon>
        <taxon>eudicotyledons</taxon>
        <taxon>Gunneridae</taxon>
        <taxon>Pentapetalae</taxon>
        <taxon>rosids</taxon>
        <taxon>malvids</taxon>
        <taxon>Brassicales</taxon>
        <taxon>Brassicaceae</taxon>
        <taxon>Camelineae</taxon>
        <taxon>Arabidopsis</taxon>
    </lineage>
</organism>
<comment type="similarity">
    <text evidence="4">Belongs to the WEB family.</text>
</comment>
<feature type="chain" id="PRO_0000414040" description="Protein WEAK CHLOROPLAST MOVEMENT UNDER BLUE LIGHT-like 2">
    <location>
        <begin position="1"/>
        <end position="752"/>
    </location>
</feature>
<feature type="region of interest" description="Disordered" evidence="3">
    <location>
        <begin position="476"/>
        <end position="495"/>
    </location>
</feature>
<feature type="region of interest" description="Disordered" evidence="3">
    <location>
        <begin position="653"/>
        <end position="733"/>
    </location>
</feature>
<feature type="coiled-coil region" evidence="2">
    <location>
        <begin position="186"/>
        <end position="557"/>
    </location>
</feature>
<feature type="coiled-coil region" evidence="2">
    <location>
        <begin position="596"/>
        <end position="651"/>
    </location>
</feature>
<feature type="compositionally biased region" description="Basic and acidic residues" evidence="3">
    <location>
        <begin position="653"/>
        <end position="675"/>
    </location>
</feature>
<feature type="compositionally biased region" description="Polar residues" evidence="3">
    <location>
        <begin position="690"/>
        <end position="723"/>
    </location>
</feature>
<feature type="modified residue" description="Phosphoserine" evidence="1">
    <location>
        <position position="143"/>
    </location>
</feature>
<name>WEL2_ARATH</name>
<reference key="1">
    <citation type="journal article" date="2000" name="Nature">
        <title>Sequence and analysis of chromosome 1 of the plant Arabidopsis thaliana.</title>
        <authorList>
            <person name="Theologis A."/>
            <person name="Ecker J.R."/>
            <person name="Palm C.J."/>
            <person name="Federspiel N.A."/>
            <person name="Kaul S."/>
            <person name="White O."/>
            <person name="Alonso J."/>
            <person name="Altafi H."/>
            <person name="Araujo R."/>
            <person name="Bowman C.L."/>
            <person name="Brooks S.Y."/>
            <person name="Buehler E."/>
            <person name="Chan A."/>
            <person name="Chao Q."/>
            <person name="Chen H."/>
            <person name="Cheuk R.F."/>
            <person name="Chin C.W."/>
            <person name="Chung M.K."/>
            <person name="Conn L."/>
            <person name="Conway A.B."/>
            <person name="Conway A.R."/>
            <person name="Creasy T.H."/>
            <person name="Dewar K."/>
            <person name="Dunn P."/>
            <person name="Etgu P."/>
            <person name="Feldblyum T.V."/>
            <person name="Feng J.-D."/>
            <person name="Fong B."/>
            <person name="Fujii C.Y."/>
            <person name="Gill J.E."/>
            <person name="Goldsmith A.D."/>
            <person name="Haas B."/>
            <person name="Hansen N.F."/>
            <person name="Hughes B."/>
            <person name="Huizar L."/>
            <person name="Hunter J.L."/>
            <person name="Jenkins J."/>
            <person name="Johnson-Hopson C."/>
            <person name="Khan S."/>
            <person name="Khaykin E."/>
            <person name="Kim C.J."/>
            <person name="Koo H.L."/>
            <person name="Kremenetskaia I."/>
            <person name="Kurtz D.B."/>
            <person name="Kwan A."/>
            <person name="Lam B."/>
            <person name="Langin-Hooper S."/>
            <person name="Lee A."/>
            <person name="Lee J.M."/>
            <person name="Lenz C.A."/>
            <person name="Li J.H."/>
            <person name="Li Y.-P."/>
            <person name="Lin X."/>
            <person name="Liu S.X."/>
            <person name="Liu Z.A."/>
            <person name="Luros J.S."/>
            <person name="Maiti R."/>
            <person name="Marziali A."/>
            <person name="Militscher J."/>
            <person name="Miranda M."/>
            <person name="Nguyen M."/>
            <person name="Nierman W.C."/>
            <person name="Osborne B.I."/>
            <person name="Pai G."/>
            <person name="Peterson J."/>
            <person name="Pham P.K."/>
            <person name="Rizzo M."/>
            <person name="Rooney T."/>
            <person name="Rowley D."/>
            <person name="Sakano H."/>
            <person name="Salzberg S.L."/>
            <person name="Schwartz J.R."/>
            <person name="Shinn P."/>
            <person name="Southwick A.M."/>
            <person name="Sun H."/>
            <person name="Tallon L.J."/>
            <person name="Tambunga G."/>
            <person name="Toriumi M.J."/>
            <person name="Town C.D."/>
            <person name="Utterback T."/>
            <person name="Van Aken S."/>
            <person name="Vaysberg M."/>
            <person name="Vysotskaia V.S."/>
            <person name="Walker M."/>
            <person name="Wu D."/>
            <person name="Yu G."/>
            <person name="Fraser C.M."/>
            <person name="Venter J.C."/>
            <person name="Davis R.W."/>
        </authorList>
    </citation>
    <scope>NUCLEOTIDE SEQUENCE [LARGE SCALE GENOMIC DNA]</scope>
    <source>
        <strain>cv. Columbia</strain>
    </source>
</reference>
<reference key="2">
    <citation type="journal article" date="2017" name="Plant J.">
        <title>Araport11: a complete reannotation of the Arabidopsis thaliana reference genome.</title>
        <authorList>
            <person name="Cheng C.Y."/>
            <person name="Krishnakumar V."/>
            <person name="Chan A.P."/>
            <person name="Thibaud-Nissen F."/>
            <person name="Schobel S."/>
            <person name="Town C.D."/>
        </authorList>
    </citation>
    <scope>GENOME REANNOTATION</scope>
    <source>
        <strain>cv. Columbia</strain>
    </source>
</reference>
<reference key="3">
    <citation type="journal article" date="2010" name="Proc. Natl. Acad. Sci. U.S.A.">
        <title>Two interacting coiled-coil proteins, WEB1 and PMI2, maintain the chloroplast photorelocation movement velocity in Arabidopsis.</title>
        <authorList>
            <person name="Kodama Y."/>
            <person name="Suetsugu N."/>
            <person name="Kong S.G."/>
            <person name="Wada M."/>
        </authorList>
    </citation>
    <scope>GENE FAMILY</scope>
</reference>
<proteinExistence type="evidence at transcript level"/>
<protein>
    <recommendedName>
        <fullName>Protein WEAK CHLOROPLAST MOVEMENT UNDER BLUE LIGHT-like 2</fullName>
        <shortName>Protein WEL2</shortName>
    </recommendedName>
</protein>
<gene>
    <name type="primary">WEL2</name>
    <name type="ordered locus">At1g45545</name>
    <name type="ORF">F2G19.5</name>
</gene>
<sequence>MDDDHKVSNDISLLPDLNFDSSSPFTSIEFDSSICDLLNLETGGDTPNLIPDHNPFFDSFDGLQEEEEDSHFVVEPESPKVYIAPRVMINHQDSFSLDSRNDEYIEDVKILPGSPGGIQDLGLSRLKVPGSPRAFVHPRSSGSPRFVSPTSPVLIDTAAPFESVKEAVSKFGGITDWKAHKIQTIERRKTVDQELEKIQEDMPDYKKQAVVAEEAKHQVVMELERTRNVVEELKLELEKAEKEEQQAKQDSDLAKLRVEEMEQGIAGEVSVAAKSQLEVAKARHLSAVSELGTIREEIEMVSNEYESLLTEKDLAAKKAEDSVLKAKDVEKQMEGLTMEVIATKQLLELAHATHLEAQEKKLDAAMARDQDVYNQEKELKMVEDEIKRFRQDIDAADDVKTKLKTASALQQDLRAEIAAYKDSNMGKRNNSDIQAAVDSARKELEEVISNIEKANSEVKTLKIIVGSLQSELAREKHDLSETRQRNREDTREEKCTEIAKKLQEASREAEEAKSLAIAAREELRKAKEESDEAKTGLSAVERQLMESKKEMEASRASEKLALAAIKALQETEYANKIEDISSSPKSIIISVEEYYELSKQAHEVEEAANRKLAEIVSKIEVAKEEESRILENLEEVSRETAIRKVELKEAMTKVEKARDGKVGMDHELRKWRSDNGNRSPEGGNKENLSKSKSALHQPTTFTFGEQASSSNVTPQASSSNVTPETETKKKKKRFSLLPKVFMFLSRKKSSNK</sequence>
<evidence type="ECO:0000250" key="1">
    <source>
        <dbReference type="UniProtKB" id="O48724"/>
    </source>
</evidence>
<evidence type="ECO:0000255" key="2"/>
<evidence type="ECO:0000256" key="3">
    <source>
        <dbReference type="SAM" id="MobiDB-lite"/>
    </source>
</evidence>
<evidence type="ECO:0000305" key="4"/>